<evidence type="ECO:0000250" key="1"/>
<evidence type="ECO:0000250" key="2">
    <source>
        <dbReference type="UniProtKB" id="Q9H2U2"/>
    </source>
</evidence>
<evidence type="ECO:0000303" key="3">
    <source>
    </source>
</evidence>
<evidence type="ECO:0000305" key="4"/>
<evidence type="ECO:0007744" key="5">
    <source>
    </source>
</evidence>
<evidence type="ECO:0007744" key="6">
    <source>
    </source>
</evidence>
<protein>
    <recommendedName>
        <fullName evidence="4">Inorganic pyrophosphatase 2, mitochondrial</fullName>
        <ecNumber evidence="2">3.6.1.1</ecNumber>
    </recommendedName>
    <alternativeName>
        <fullName>Pyrophosphate phospho-hydrolase 2</fullName>
        <shortName>PPase 2</shortName>
    </alternativeName>
</protein>
<proteinExistence type="evidence at protein level"/>
<accession>Q91VM9</accession>
<accession>Q3UPK3</accession>
<accession>Q8BTG5</accession>
<accession>Q9D1E3</accession>
<organism>
    <name type="scientific">Mus musculus</name>
    <name type="common">Mouse</name>
    <dbReference type="NCBI Taxonomy" id="10090"/>
    <lineage>
        <taxon>Eukaryota</taxon>
        <taxon>Metazoa</taxon>
        <taxon>Chordata</taxon>
        <taxon>Craniata</taxon>
        <taxon>Vertebrata</taxon>
        <taxon>Euteleostomi</taxon>
        <taxon>Mammalia</taxon>
        <taxon>Eutheria</taxon>
        <taxon>Euarchontoglires</taxon>
        <taxon>Glires</taxon>
        <taxon>Rodentia</taxon>
        <taxon>Myomorpha</taxon>
        <taxon>Muroidea</taxon>
        <taxon>Muridae</taxon>
        <taxon>Murinae</taxon>
        <taxon>Mus</taxon>
        <taxon>Mus</taxon>
    </lineage>
</organism>
<feature type="transit peptide" description="Mitochondrion" evidence="1">
    <location>
        <begin position="1"/>
        <end position="27"/>
    </location>
</feature>
<feature type="chain" id="PRO_0000025412" description="Inorganic pyrophosphatase 2, mitochondrial">
    <location>
        <begin position="28"/>
        <end position="330"/>
    </location>
</feature>
<feature type="binding site" evidence="1">
    <location>
        <position position="159"/>
    </location>
    <ligand>
        <name>Mg(2+)</name>
        <dbReference type="ChEBI" id="CHEBI:18420"/>
        <label>1</label>
    </ligand>
</feature>
<feature type="binding site" evidence="1">
    <location>
        <position position="164"/>
    </location>
    <ligand>
        <name>Mg(2+)</name>
        <dbReference type="ChEBI" id="CHEBI:18420"/>
        <label>1</label>
    </ligand>
</feature>
<feature type="binding site" evidence="1">
    <location>
        <position position="164"/>
    </location>
    <ligand>
        <name>Mg(2+)</name>
        <dbReference type="ChEBI" id="CHEBI:18420"/>
        <label>2</label>
    </ligand>
</feature>
<feature type="binding site" evidence="1">
    <location>
        <position position="196"/>
    </location>
    <ligand>
        <name>Mg(2+)</name>
        <dbReference type="ChEBI" id="CHEBI:18420"/>
        <label>1</label>
    </ligand>
</feature>
<feature type="modified residue" description="N6-succinyllysine" evidence="6">
    <location>
        <position position="211"/>
    </location>
</feature>
<feature type="modified residue" description="N6-acetyllysine" evidence="5">
    <location>
        <position position="219"/>
    </location>
</feature>
<feature type="modified residue" description="N6-succinyllysine" evidence="6">
    <location>
        <position position="254"/>
    </location>
</feature>
<feature type="modified residue" description="N6-acetyllysine" evidence="5">
    <location>
        <position position="256"/>
    </location>
</feature>
<feature type="splice variant" id="VSP_011653" description="In isoform 2." evidence="3">
    <location>
        <begin position="1"/>
        <end position="126"/>
    </location>
</feature>
<feature type="splice variant" id="VSP_011654" description="In isoform 2." evidence="3">
    <original>IFPHKGYIWNYGALPQTWEDPHLRDKSTDCCGDNDPIDVCEIGS</original>
    <variation>MLDADAPQNCQSWEGKDKQIPGPHRPNSQACLVKFQAIETLSQM</variation>
    <location>
        <begin position="127"/>
        <end position="170"/>
    </location>
</feature>
<feature type="sequence conflict" description="In Ref. 1; BAC41194." evidence="4" ref="1">
    <original>YLE</original>
    <variation>HLQ</variation>
    <location>
        <begin position="225"/>
        <end position="227"/>
    </location>
</feature>
<feature type="sequence conflict" description="In Ref. 1; BAC41194." evidence="4" ref="1">
    <original>K</original>
    <variation>T</variation>
    <location>
        <position position="254"/>
    </location>
</feature>
<feature type="sequence conflict" description="In Ref. 1; BAC41194." evidence="4" ref="1">
    <location>
        <position position="321"/>
    </location>
</feature>
<sequence>MRALLPLLSVGRGWRVGAAARPPRRVMSLYRTEELGHPRSQDYRLFFKHVAGHYISPFHDIPLKADCKEEHDIPRKKARNDEYENLFNMVVEIPRWTNAKMEIATEEPLNPIKQDIKNGKLRYTPNIFPHKGYIWNYGALPQTWEDPHLRDKSTDCCGDNDPIDVCEIGSKVLSRGDVVHVKILGTLALIDQSETDWKIIAINVNDPEAEKFHDIDDVKKFKPGYLEATLNWFRLYKVPDGKPENKFAFNGEFKNKAFALDVINSAHERWKEMVMKKCDKGAISCVNVHICDSPFHCTMEEARSLVESVPTPSMNKESNVEEEVWHFLRN</sequence>
<gene>
    <name type="primary">Ppa2</name>
</gene>
<name>IPYR2_MOUSE</name>
<comment type="function">
    <text evidence="2">Hydrolyzes inorganic pyrophosphate. This activity is essential for correct regulation of mitochondrial membrane potential, and mitochondrial organization and function.</text>
</comment>
<comment type="catalytic activity">
    <reaction evidence="2">
        <text>diphosphate + H2O = 2 phosphate + H(+)</text>
        <dbReference type="Rhea" id="RHEA:24576"/>
        <dbReference type="ChEBI" id="CHEBI:15377"/>
        <dbReference type="ChEBI" id="CHEBI:15378"/>
        <dbReference type="ChEBI" id="CHEBI:33019"/>
        <dbReference type="ChEBI" id="CHEBI:43474"/>
        <dbReference type="EC" id="3.6.1.1"/>
    </reaction>
    <physiologicalReaction direction="left-to-right" evidence="2">
        <dbReference type="Rhea" id="RHEA:24577"/>
    </physiologicalReaction>
</comment>
<comment type="cofactor">
    <cofactor evidence="1">
        <name>Mg(2+)</name>
        <dbReference type="ChEBI" id="CHEBI:18420"/>
    </cofactor>
</comment>
<comment type="subunit">
    <text evidence="1">Homodimer.</text>
</comment>
<comment type="subcellular location">
    <subcellularLocation>
        <location evidence="2">Mitochondrion</location>
    </subcellularLocation>
</comment>
<comment type="alternative products">
    <event type="alternative splicing"/>
    <isoform>
        <id>Q91VM9-1</id>
        <name>1</name>
        <sequence type="displayed"/>
    </isoform>
    <isoform>
        <id>Q91VM9-2</id>
        <name>2</name>
        <sequence type="described" ref="VSP_011653 VSP_011654"/>
    </isoform>
</comment>
<comment type="similarity">
    <text evidence="4">Belongs to the PPase family.</text>
</comment>
<dbReference type="EC" id="3.6.1.1" evidence="2"/>
<dbReference type="EMBL" id="AK003660">
    <property type="protein sequence ID" value="BAB22922.1"/>
    <property type="molecule type" value="mRNA"/>
</dbReference>
<dbReference type="EMBL" id="AK090384">
    <property type="protein sequence ID" value="BAC41194.1"/>
    <property type="molecule type" value="mRNA"/>
</dbReference>
<dbReference type="EMBL" id="AK143475">
    <property type="protein sequence ID" value="BAE25392.1"/>
    <property type="molecule type" value="mRNA"/>
</dbReference>
<dbReference type="EMBL" id="BC011417">
    <property type="protein sequence ID" value="AAH11417.1"/>
    <property type="molecule type" value="mRNA"/>
</dbReference>
<dbReference type="CCDS" id="CCDS17850.1">
    <molecule id="Q91VM9-1"/>
</dbReference>
<dbReference type="RefSeq" id="NP_001280570.1">
    <property type="nucleotide sequence ID" value="NM_001293641.1"/>
</dbReference>
<dbReference type="RefSeq" id="NP_666253.1">
    <molecule id="Q91VM9-1"/>
    <property type="nucleotide sequence ID" value="NM_146141.2"/>
</dbReference>
<dbReference type="SMR" id="Q91VM9"/>
<dbReference type="BioGRID" id="217012">
    <property type="interactions" value="7"/>
</dbReference>
<dbReference type="FunCoup" id="Q91VM9">
    <property type="interactions" value="2350"/>
</dbReference>
<dbReference type="IntAct" id="Q91VM9">
    <property type="interactions" value="1"/>
</dbReference>
<dbReference type="MINT" id="Q91VM9"/>
<dbReference type="STRING" id="10090.ENSMUSP00000029644"/>
<dbReference type="GlyGen" id="Q91VM9">
    <property type="glycosylation" value="2 sites, 1 O-linked glycan (1 site)"/>
</dbReference>
<dbReference type="iPTMnet" id="Q91VM9"/>
<dbReference type="PhosphoSitePlus" id="Q91VM9"/>
<dbReference type="SwissPalm" id="Q91VM9"/>
<dbReference type="REPRODUCTION-2DPAGE" id="Q91VM9"/>
<dbReference type="jPOST" id="Q91VM9"/>
<dbReference type="PaxDb" id="10090-ENSMUSP00000029644"/>
<dbReference type="PeptideAtlas" id="Q91VM9"/>
<dbReference type="ProteomicsDB" id="269324">
    <molecule id="Q91VM9-1"/>
</dbReference>
<dbReference type="ProteomicsDB" id="269325">
    <molecule id="Q91VM9-2"/>
</dbReference>
<dbReference type="Pumba" id="Q91VM9"/>
<dbReference type="Antibodypedia" id="26143">
    <property type="antibodies" value="124 antibodies from 23 providers"/>
</dbReference>
<dbReference type="DNASU" id="74776"/>
<dbReference type="Ensembl" id="ENSMUST00000029644.16">
    <molecule id="Q91VM9-1"/>
    <property type="protein sequence ID" value="ENSMUSP00000029644.10"/>
    <property type="gene ID" value="ENSMUSG00000028013.17"/>
</dbReference>
<dbReference type="GeneID" id="74776"/>
<dbReference type="KEGG" id="mmu:74776"/>
<dbReference type="UCSC" id="uc008rkm.2">
    <molecule id="Q91VM9-1"/>
    <property type="organism name" value="mouse"/>
</dbReference>
<dbReference type="AGR" id="MGI:1922026"/>
<dbReference type="CTD" id="27068"/>
<dbReference type="MGI" id="MGI:1922026">
    <property type="gene designation" value="Ppa2"/>
</dbReference>
<dbReference type="VEuPathDB" id="HostDB:ENSMUSG00000028013"/>
<dbReference type="eggNOG" id="KOG1626">
    <property type="taxonomic scope" value="Eukaryota"/>
</dbReference>
<dbReference type="GeneTree" id="ENSGT00390000017004"/>
<dbReference type="HOGENOM" id="CLU_040684_0_2_1"/>
<dbReference type="InParanoid" id="Q91VM9"/>
<dbReference type="OMA" id="CASQYNA"/>
<dbReference type="OrthoDB" id="1608002at2759"/>
<dbReference type="PhylomeDB" id="Q91VM9"/>
<dbReference type="TreeFam" id="TF300887"/>
<dbReference type="Reactome" id="R-MMU-379726">
    <property type="pathway name" value="Mitochondrial tRNA aminoacylation"/>
</dbReference>
<dbReference type="Reactome" id="R-MMU-71737">
    <property type="pathway name" value="Pyrophosphate hydrolysis"/>
</dbReference>
<dbReference type="BioGRID-ORCS" id="74776">
    <property type="hits" value="20 hits in 81 CRISPR screens"/>
</dbReference>
<dbReference type="ChiTaRS" id="Ppa2">
    <property type="organism name" value="mouse"/>
</dbReference>
<dbReference type="PRO" id="PR:Q91VM9"/>
<dbReference type="Proteomes" id="UP000000589">
    <property type="component" value="Chromosome 3"/>
</dbReference>
<dbReference type="RNAct" id="Q91VM9">
    <property type="molecule type" value="protein"/>
</dbReference>
<dbReference type="Bgee" id="ENSMUSG00000028013">
    <property type="expression patterns" value="Expressed in right kidney and 257 other cell types or tissues"/>
</dbReference>
<dbReference type="ExpressionAtlas" id="Q91VM9">
    <property type="expression patterns" value="baseline and differential"/>
</dbReference>
<dbReference type="GO" id="GO:0005739">
    <property type="term" value="C:mitochondrion"/>
    <property type="evidence" value="ECO:0007005"/>
    <property type="project" value="MGI"/>
</dbReference>
<dbReference type="GO" id="GO:0045202">
    <property type="term" value="C:synapse"/>
    <property type="evidence" value="ECO:0000314"/>
    <property type="project" value="SynGO"/>
</dbReference>
<dbReference type="GO" id="GO:0004427">
    <property type="term" value="F:inorganic diphosphate phosphatase activity"/>
    <property type="evidence" value="ECO:0000250"/>
    <property type="project" value="UniProtKB"/>
</dbReference>
<dbReference type="GO" id="GO:0000287">
    <property type="term" value="F:magnesium ion binding"/>
    <property type="evidence" value="ECO:0007669"/>
    <property type="project" value="InterPro"/>
</dbReference>
<dbReference type="GO" id="GO:0004722">
    <property type="term" value="F:protein serine/threonine phosphatase activity"/>
    <property type="evidence" value="ECO:0000314"/>
    <property type="project" value="MGI"/>
</dbReference>
<dbReference type="GO" id="GO:0071344">
    <property type="term" value="P:diphosphate metabolic process"/>
    <property type="evidence" value="ECO:0000250"/>
    <property type="project" value="UniProtKB"/>
</dbReference>
<dbReference type="GO" id="GO:0006796">
    <property type="term" value="P:phosphate-containing compound metabolic process"/>
    <property type="evidence" value="ECO:0007669"/>
    <property type="project" value="InterPro"/>
</dbReference>
<dbReference type="GO" id="GO:0051881">
    <property type="term" value="P:regulation of mitochondrial membrane potential"/>
    <property type="evidence" value="ECO:0007669"/>
    <property type="project" value="Ensembl"/>
</dbReference>
<dbReference type="CDD" id="cd00412">
    <property type="entry name" value="pyrophosphatase"/>
    <property type="match status" value="1"/>
</dbReference>
<dbReference type="FunFam" id="3.90.80.10:FF:000005">
    <property type="entry name" value="Pyrophosphatase (inorganic) 2"/>
    <property type="match status" value="1"/>
</dbReference>
<dbReference type="Gene3D" id="3.90.80.10">
    <property type="entry name" value="Inorganic pyrophosphatase"/>
    <property type="match status" value="1"/>
</dbReference>
<dbReference type="InterPro" id="IPR008162">
    <property type="entry name" value="Pyrophosphatase"/>
</dbReference>
<dbReference type="InterPro" id="IPR036649">
    <property type="entry name" value="Pyrophosphatase_sf"/>
</dbReference>
<dbReference type="PANTHER" id="PTHR10286">
    <property type="entry name" value="INORGANIC PYROPHOSPHATASE"/>
    <property type="match status" value="1"/>
</dbReference>
<dbReference type="Pfam" id="PF00719">
    <property type="entry name" value="Pyrophosphatase"/>
    <property type="match status" value="1"/>
</dbReference>
<dbReference type="SUPFAM" id="SSF50324">
    <property type="entry name" value="Inorganic pyrophosphatase"/>
    <property type="match status" value="1"/>
</dbReference>
<dbReference type="PROSITE" id="PS00387">
    <property type="entry name" value="PPASE"/>
    <property type="match status" value="1"/>
</dbReference>
<reference key="1">
    <citation type="journal article" date="2005" name="Science">
        <title>The transcriptional landscape of the mammalian genome.</title>
        <authorList>
            <person name="Carninci P."/>
            <person name="Kasukawa T."/>
            <person name="Katayama S."/>
            <person name="Gough J."/>
            <person name="Frith M.C."/>
            <person name="Maeda N."/>
            <person name="Oyama R."/>
            <person name="Ravasi T."/>
            <person name="Lenhard B."/>
            <person name="Wells C."/>
            <person name="Kodzius R."/>
            <person name="Shimokawa K."/>
            <person name="Bajic V.B."/>
            <person name="Brenner S.E."/>
            <person name="Batalov S."/>
            <person name="Forrest A.R."/>
            <person name="Zavolan M."/>
            <person name="Davis M.J."/>
            <person name="Wilming L.G."/>
            <person name="Aidinis V."/>
            <person name="Allen J.E."/>
            <person name="Ambesi-Impiombato A."/>
            <person name="Apweiler R."/>
            <person name="Aturaliya R.N."/>
            <person name="Bailey T.L."/>
            <person name="Bansal M."/>
            <person name="Baxter L."/>
            <person name="Beisel K.W."/>
            <person name="Bersano T."/>
            <person name="Bono H."/>
            <person name="Chalk A.M."/>
            <person name="Chiu K.P."/>
            <person name="Choudhary V."/>
            <person name="Christoffels A."/>
            <person name="Clutterbuck D.R."/>
            <person name="Crowe M.L."/>
            <person name="Dalla E."/>
            <person name="Dalrymple B.P."/>
            <person name="de Bono B."/>
            <person name="Della Gatta G."/>
            <person name="di Bernardo D."/>
            <person name="Down T."/>
            <person name="Engstrom P."/>
            <person name="Fagiolini M."/>
            <person name="Faulkner G."/>
            <person name="Fletcher C.F."/>
            <person name="Fukushima T."/>
            <person name="Furuno M."/>
            <person name="Futaki S."/>
            <person name="Gariboldi M."/>
            <person name="Georgii-Hemming P."/>
            <person name="Gingeras T.R."/>
            <person name="Gojobori T."/>
            <person name="Green R.E."/>
            <person name="Gustincich S."/>
            <person name="Harbers M."/>
            <person name="Hayashi Y."/>
            <person name="Hensch T.K."/>
            <person name="Hirokawa N."/>
            <person name="Hill D."/>
            <person name="Huminiecki L."/>
            <person name="Iacono M."/>
            <person name="Ikeo K."/>
            <person name="Iwama A."/>
            <person name="Ishikawa T."/>
            <person name="Jakt M."/>
            <person name="Kanapin A."/>
            <person name="Katoh M."/>
            <person name="Kawasawa Y."/>
            <person name="Kelso J."/>
            <person name="Kitamura H."/>
            <person name="Kitano H."/>
            <person name="Kollias G."/>
            <person name="Krishnan S.P."/>
            <person name="Kruger A."/>
            <person name="Kummerfeld S.K."/>
            <person name="Kurochkin I.V."/>
            <person name="Lareau L.F."/>
            <person name="Lazarevic D."/>
            <person name="Lipovich L."/>
            <person name="Liu J."/>
            <person name="Liuni S."/>
            <person name="McWilliam S."/>
            <person name="Madan Babu M."/>
            <person name="Madera M."/>
            <person name="Marchionni L."/>
            <person name="Matsuda H."/>
            <person name="Matsuzawa S."/>
            <person name="Miki H."/>
            <person name="Mignone F."/>
            <person name="Miyake S."/>
            <person name="Morris K."/>
            <person name="Mottagui-Tabar S."/>
            <person name="Mulder N."/>
            <person name="Nakano N."/>
            <person name="Nakauchi H."/>
            <person name="Ng P."/>
            <person name="Nilsson R."/>
            <person name="Nishiguchi S."/>
            <person name="Nishikawa S."/>
            <person name="Nori F."/>
            <person name="Ohara O."/>
            <person name="Okazaki Y."/>
            <person name="Orlando V."/>
            <person name="Pang K.C."/>
            <person name="Pavan W.J."/>
            <person name="Pavesi G."/>
            <person name="Pesole G."/>
            <person name="Petrovsky N."/>
            <person name="Piazza S."/>
            <person name="Reed J."/>
            <person name="Reid J.F."/>
            <person name="Ring B.Z."/>
            <person name="Ringwald M."/>
            <person name="Rost B."/>
            <person name="Ruan Y."/>
            <person name="Salzberg S.L."/>
            <person name="Sandelin A."/>
            <person name="Schneider C."/>
            <person name="Schoenbach C."/>
            <person name="Sekiguchi K."/>
            <person name="Semple C.A."/>
            <person name="Seno S."/>
            <person name="Sessa L."/>
            <person name="Sheng Y."/>
            <person name="Shibata Y."/>
            <person name="Shimada H."/>
            <person name="Shimada K."/>
            <person name="Silva D."/>
            <person name="Sinclair B."/>
            <person name="Sperling S."/>
            <person name="Stupka E."/>
            <person name="Sugiura K."/>
            <person name="Sultana R."/>
            <person name="Takenaka Y."/>
            <person name="Taki K."/>
            <person name="Tammoja K."/>
            <person name="Tan S.L."/>
            <person name="Tang S."/>
            <person name="Taylor M.S."/>
            <person name="Tegner J."/>
            <person name="Teichmann S.A."/>
            <person name="Ueda H.R."/>
            <person name="van Nimwegen E."/>
            <person name="Verardo R."/>
            <person name="Wei C.L."/>
            <person name="Yagi K."/>
            <person name="Yamanishi H."/>
            <person name="Zabarovsky E."/>
            <person name="Zhu S."/>
            <person name="Zimmer A."/>
            <person name="Hide W."/>
            <person name="Bult C."/>
            <person name="Grimmond S.M."/>
            <person name="Teasdale R.D."/>
            <person name="Liu E.T."/>
            <person name="Brusic V."/>
            <person name="Quackenbush J."/>
            <person name="Wahlestedt C."/>
            <person name="Mattick J.S."/>
            <person name="Hume D.A."/>
            <person name="Kai C."/>
            <person name="Sasaki D."/>
            <person name="Tomaru Y."/>
            <person name="Fukuda S."/>
            <person name="Kanamori-Katayama M."/>
            <person name="Suzuki M."/>
            <person name="Aoki J."/>
            <person name="Arakawa T."/>
            <person name="Iida J."/>
            <person name="Imamura K."/>
            <person name="Itoh M."/>
            <person name="Kato T."/>
            <person name="Kawaji H."/>
            <person name="Kawagashira N."/>
            <person name="Kawashima T."/>
            <person name="Kojima M."/>
            <person name="Kondo S."/>
            <person name="Konno H."/>
            <person name="Nakano K."/>
            <person name="Ninomiya N."/>
            <person name="Nishio T."/>
            <person name="Okada M."/>
            <person name="Plessy C."/>
            <person name="Shibata K."/>
            <person name="Shiraki T."/>
            <person name="Suzuki S."/>
            <person name="Tagami M."/>
            <person name="Waki K."/>
            <person name="Watahiki A."/>
            <person name="Okamura-Oho Y."/>
            <person name="Suzuki H."/>
            <person name="Kawai J."/>
            <person name="Hayashizaki Y."/>
        </authorList>
    </citation>
    <scope>NUCLEOTIDE SEQUENCE [LARGE SCALE MRNA] (ISOFORMS 1 AND 2)</scope>
    <source>
        <strain>C57BL/6J</strain>
        <tissue>Embryo</tissue>
        <tissue>Spinal cord</tissue>
    </source>
</reference>
<reference key="2">
    <citation type="journal article" date="2004" name="Genome Res.">
        <title>The status, quality, and expansion of the NIH full-length cDNA project: the Mammalian Gene Collection (MGC).</title>
        <authorList>
            <consortium name="The MGC Project Team"/>
        </authorList>
    </citation>
    <scope>NUCLEOTIDE SEQUENCE [LARGE SCALE MRNA] (ISOFORM 1)</scope>
    <source>
        <strain>NMRI</strain>
        <tissue>Mammary tumor</tissue>
    </source>
</reference>
<reference key="3">
    <citation type="journal article" date="2010" name="Cell">
        <title>A tissue-specific atlas of mouse protein phosphorylation and expression.</title>
        <authorList>
            <person name="Huttlin E.L."/>
            <person name="Jedrychowski M.P."/>
            <person name="Elias J.E."/>
            <person name="Goswami T."/>
            <person name="Rad R."/>
            <person name="Beausoleil S.A."/>
            <person name="Villen J."/>
            <person name="Haas W."/>
            <person name="Sowa M.E."/>
            <person name="Gygi S.P."/>
        </authorList>
    </citation>
    <scope>IDENTIFICATION BY MASS SPECTROMETRY [LARGE SCALE ANALYSIS]</scope>
    <source>
        <tissue>Brain</tissue>
        <tissue>Brown adipose tissue</tissue>
        <tissue>Heart</tissue>
        <tissue>Kidney</tissue>
        <tissue>Liver</tissue>
        <tissue>Lung</tissue>
        <tissue>Pancreas</tissue>
        <tissue>Spleen</tissue>
        <tissue>Testis</tissue>
    </source>
</reference>
<reference key="4">
    <citation type="journal article" date="2013" name="Mol. Cell">
        <title>SIRT5-mediated lysine desuccinylation impacts diverse metabolic pathways.</title>
        <authorList>
            <person name="Park J."/>
            <person name="Chen Y."/>
            <person name="Tishkoff D.X."/>
            <person name="Peng C."/>
            <person name="Tan M."/>
            <person name="Dai L."/>
            <person name="Xie Z."/>
            <person name="Zhang Y."/>
            <person name="Zwaans B.M."/>
            <person name="Skinner M.E."/>
            <person name="Lombard D.B."/>
            <person name="Zhao Y."/>
        </authorList>
    </citation>
    <scope>SUCCINYLATION [LARGE SCALE ANALYSIS] AT LYS-211 AND LYS-254</scope>
    <scope>IDENTIFICATION BY MASS SPECTROMETRY [LARGE SCALE ANALYSIS]</scope>
    <source>
        <tissue>Liver</tissue>
    </source>
</reference>
<reference key="5">
    <citation type="journal article" date="2013" name="Proc. Natl. Acad. Sci. U.S.A.">
        <title>Label-free quantitative proteomics of the lysine acetylome in mitochondria identifies substrates of SIRT3 in metabolic pathways.</title>
        <authorList>
            <person name="Rardin M.J."/>
            <person name="Newman J.C."/>
            <person name="Held J.M."/>
            <person name="Cusack M.P."/>
            <person name="Sorensen D.J."/>
            <person name="Li B."/>
            <person name="Schilling B."/>
            <person name="Mooney S.D."/>
            <person name="Kahn C.R."/>
            <person name="Verdin E."/>
            <person name="Gibson B.W."/>
        </authorList>
    </citation>
    <scope>ACETYLATION [LARGE SCALE ANALYSIS] AT LYS-219 AND LYS-256</scope>
    <scope>IDENTIFICATION BY MASS SPECTROMETRY [LARGE SCALE ANALYSIS]</scope>
    <source>
        <tissue>Liver</tissue>
    </source>
</reference>
<keyword id="KW-0007">Acetylation</keyword>
<keyword id="KW-0025">Alternative splicing</keyword>
<keyword id="KW-0378">Hydrolase</keyword>
<keyword id="KW-0460">Magnesium</keyword>
<keyword id="KW-0479">Metal-binding</keyword>
<keyword id="KW-0496">Mitochondrion</keyword>
<keyword id="KW-1185">Reference proteome</keyword>
<keyword id="KW-0809">Transit peptide</keyword>